<keyword id="KW-0963">Cytoplasm</keyword>
<keyword id="KW-0251">Elongation factor</keyword>
<keyword id="KW-0342">GTP-binding</keyword>
<keyword id="KW-0547">Nucleotide-binding</keyword>
<keyword id="KW-0648">Protein biosynthesis</keyword>
<keyword id="KW-1185">Reference proteome</keyword>
<comment type="function">
    <text evidence="1">Catalyzes the GTP-dependent ribosomal translocation step during translation elongation. During this step, the ribosome changes from the pre-translocational (PRE) to the post-translocational (POST) state as the newly formed A-site-bound peptidyl-tRNA and P-site-bound deacylated tRNA move to the P and E sites, respectively. Catalyzes the coordinated movement of the two tRNA molecules, the mRNA and conformational changes in the ribosome.</text>
</comment>
<comment type="subcellular location">
    <subcellularLocation>
        <location evidence="1">Cytoplasm</location>
    </subcellularLocation>
</comment>
<comment type="similarity">
    <text evidence="1">Belongs to the TRAFAC class translation factor GTPase superfamily. Classic translation factor GTPase family. EF-G/EF-2 subfamily.</text>
</comment>
<evidence type="ECO:0000255" key="1">
    <source>
        <dbReference type="HAMAP-Rule" id="MF_00054"/>
    </source>
</evidence>
<gene>
    <name evidence="1" type="primary">fusA</name>
    <name type="ordered locus">pc0207</name>
</gene>
<dbReference type="EMBL" id="BX908798">
    <property type="protein sequence ID" value="CAF22931.1"/>
    <property type="molecule type" value="Genomic_DNA"/>
</dbReference>
<dbReference type="RefSeq" id="WP_011174757.1">
    <property type="nucleotide sequence ID" value="NC_005861.2"/>
</dbReference>
<dbReference type="SMR" id="Q6MER8"/>
<dbReference type="STRING" id="264201.pc0207"/>
<dbReference type="KEGG" id="pcu:PC_RS01015"/>
<dbReference type="eggNOG" id="COG0480">
    <property type="taxonomic scope" value="Bacteria"/>
</dbReference>
<dbReference type="HOGENOM" id="CLU_002794_4_1_0"/>
<dbReference type="OrthoDB" id="9801591at2"/>
<dbReference type="Proteomes" id="UP000000529">
    <property type="component" value="Chromosome"/>
</dbReference>
<dbReference type="GO" id="GO:0005737">
    <property type="term" value="C:cytoplasm"/>
    <property type="evidence" value="ECO:0007669"/>
    <property type="project" value="UniProtKB-SubCell"/>
</dbReference>
<dbReference type="GO" id="GO:0005525">
    <property type="term" value="F:GTP binding"/>
    <property type="evidence" value="ECO:0007669"/>
    <property type="project" value="UniProtKB-UniRule"/>
</dbReference>
<dbReference type="GO" id="GO:0003924">
    <property type="term" value="F:GTPase activity"/>
    <property type="evidence" value="ECO:0007669"/>
    <property type="project" value="InterPro"/>
</dbReference>
<dbReference type="GO" id="GO:0003746">
    <property type="term" value="F:translation elongation factor activity"/>
    <property type="evidence" value="ECO:0007669"/>
    <property type="project" value="UniProtKB-UniRule"/>
</dbReference>
<dbReference type="GO" id="GO:0032790">
    <property type="term" value="P:ribosome disassembly"/>
    <property type="evidence" value="ECO:0007669"/>
    <property type="project" value="TreeGrafter"/>
</dbReference>
<dbReference type="CDD" id="cd01886">
    <property type="entry name" value="EF-G"/>
    <property type="match status" value="1"/>
</dbReference>
<dbReference type="CDD" id="cd16262">
    <property type="entry name" value="EFG_III"/>
    <property type="match status" value="1"/>
</dbReference>
<dbReference type="CDD" id="cd01434">
    <property type="entry name" value="EFG_mtEFG1_IV"/>
    <property type="match status" value="1"/>
</dbReference>
<dbReference type="CDD" id="cd03713">
    <property type="entry name" value="EFG_mtEFG_C"/>
    <property type="match status" value="1"/>
</dbReference>
<dbReference type="CDD" id="cd04088">
    <property type="entry name" value="EFG_mtEFG_II"/>
    <property type="match status" value="1"/>
</dbReference>
<dbReference type="FunFam" id="2.40.30.10:FF:000006">
    <property type="entry name" value="Elongation factor G"/>
    <property type="match status" value="1"/>
</dbReference>
<dbReference type="FunFam" id="3.30.230.10:FF:000003">
    <property type="entry name" value="Elongation factor G"/>
    <property type="match status" value="1"/>
</dbReference>
<dbReference type="FunFam" id="3.30.70.240:FF:000001">
    <property type="entry name" value="Elongation factor G"/>
    <property type="match status" value="1"/>
</dbReference>
<dbReference type="FunFam" id="3.30.70.870:FF:000001">
    <property type="entry name" value="Elongation factor G"/>
    <property type="match status" value="1"/>
</dbReference>
<dbReference type="FunFam" id="3.40.50.300:FF:000029">
    <property type="entry name" value="Elongation factor G"/>
    <property type="match status" value="1"/>
</dbReference>
<dbReference type="Gene3D" id="3.30.230.10">
    <property type="match status" value="1"/>
</dbReference>
<dbReference type="Gene3D" id="3.30.70.240">
    <property type="match status" value="1"/>
</dbReference>
<dbReference type="Gene3D" id="3.30.70.870">
    <property type="entry name" value="Elongation Factor G (Translational Gtpase), domain 3"/>
    <property type="match status" value="1"/>
</dbReference>
<dbReference type="Gene3D" id="3.40.50.300">
    <property type="entry name" value="P-loop containing nucleotide triphosphate hydrolases"/>
    <property type="match status" value="1"/>
</dbReference>
<dbReference type="Gene3D" id="2.40.30.10">
    <property type="entry name" value="Translation factors"/>
    <property type="match status" value="1"/>
</dbReference>
<dbReference type="HAMAP" id="MF_00054_B">
    <property type="entry name" value="EF_G_EF_2_B"/>
    <property type="match status" value="1"/>
</dbReference>
<dbReference type="InterPro" id="IPR041095">
    <property type="entry name" value="EFG_II"/>
</dbReference>
<dbReference type="InterPro" id="IPR009022">
    <property type="entry name" value="EFG_III"/>
</dbReference>
<dbReference type="InterPro" id="IPR035647">
    <property type="entry name" value="EFG_III/V"/>
</dbReference>
<dbReference type="InterPro" id="IPR047872">
    <property type="entry name" value="EFG_IV"/>
</dbReference>
<dbReference type="InterPro" id="IPR035649">
    <property type="entry name" value="EFG_V"/>
</dbReference>
<dbReference type="InterPro" id="IPR000640">
    <property type="entry name" value="EFG_V-like"/>
</dbReference>
<dbReference type="InterPro" id="IPR004161">
    <property type="entry name" value="EFTu-like_2"/>
</dbReference>
<dbReference type="InterPro" id="IPR031157">
    <property type="entry name" value="G_TR_CS"/>
</dbReference>
<dbReference type="InterPro" id="IPR027417">
    <property type="entry name" value="P-loop_NTPase"/>
</dbReference>
<dbReference type="InterPro" id="IPR020568">
    <property type="entry name" value="Ribosomal_Su5_D2-typ_SF"/>
</dbReference>
<dbReference type="InterPro" id="IPR014721">
    <property type="entry name" value="Ribsml_uS5_D2-typ_fold_subgr"/>
</dbReference>
<dbReference type="InterPro" id="IPR005225">
    <property type="entry name" value="Small_GTP-bd"/>
</dbReference>
<dbReference type="InterPro" id="IPR000795">
    <property type="entry name" value="T_Tr_GTP-bd_dom"/>
</dbReference>
<dbReference type="InterPro" id="IPR009000">
    <property type="entry name" value="Transl_B-barrel_sf"/>
</dbReference>
<dbReference type="InterPro" id="IPR004540">
    <property type="entry name" value="Transl_elong_EFG/EF2"/>
</dbReference>
<dbReference type="InterPro" id="IPR005517">
    <property type="entry name" value="Transl_elong_EFG/EF2_IV"/>
</dbReference>
<dbReference type="NCBIfam" id="TIGR00484">
    <property type="entry name" value="EF-G"/>
    <property type="match status" value="1"/>
</dbReference>
<dbReference type="NCBIfam" id="NF009381">
    <property type="entry name" value="PRK12740.1-5"/>
    <property type="match status" value="1"/>
</dbReference>
<dbReference type="NCBIfam" id="TIGR00231">
    <property type="entry name" value="small_GTP"/>
    <property type="match status" value="1"/>
</dbReference>
<dbReference type="PANTHER" id="PTHR43261:SF1">
    <property type="entry name" value="RIBOSOME-RELEASING FACTOR 2, MITOCHONDRIAL"/>
    <property type="match status" value="1"/>
</dbReference>
<dbReference type="PANTHER" id="PTHR43261">
    <property type="entry name" value="TRANSLATION ELONGATION FACTOR G-RELATED"/>
    <property type="match status" value="1"/>
</dbReference>
<dbReference type="Pfam" id="PF00679">
    <property type="entry name" value="EFG_C"/>
    <property type="match status" value="1"/>
</dbReference>
<dbReference type="Pfam" id="PF14492">
    <property type="entry name" value="EFG_III"/>
    <property type="match status" value="1"/>
</dbReference>
<dbReference type="Pfam" id="PF03764">
    <property type="entry name" value="EFG_IV"/>
    <property type="match status" value="1"/>
</dbReference>
<dbReference type="Pfam" id="PF00009">
    <property type="entry name" value="GTP_EFTU"/>
    <property type="match status" value="1"/>
</dbReference>
<dbReference type="Pfam" id="PF03144">
    <property type="entry name" value="GTP_EFTU_D2"/>
    <property type="match status" value="1"/>
</dbReference>
<dbReference type="PRINTS" id="PR00315">
    <property type="entry name" value="ELONGATNFCT"/>
</dbReference>
<dbReference type="SMART" id="SM00838">
    <property type="entry name" value="EFG_C"/>
    <property type="match status" value="1"/>
</dbReference>
<dbReference type="SMART" id="SM00889">
    <property type="entry name" value="EFG_IV"/>
    <property type="match status" value="1"/>
</dbReference>
<dbReference type="SUPFAM" id="SSF54980">
    <property type="entry name" value="EF-G C-terminal domain-like"/>
    <property type="match status" value="2"/>
</dbReference>
<dbReference type="SUPFAM" id="SSF52540">
    <property type="entry name" value="P-loop containing nucleoside triphosphate hydrolases"/>
    <property type="match status" value="1"/>
</dbReference>
<dbReference type="SUPFAM" id="SSF54211">
    <property type="entry name" value="Ribosomal protein S5 domain 2-like"/>
    <property type="match status" value="1"/>
</dbReference>
<dbReference type="SUPFAM" id="SSF50447">
    <property type="entry name" value="Translation proteins"/>
    <property type="match status" value="1"/>
</dbReference>
<dbReference type="PROSITE" id="PS00301">
    <property type="entry name" value="G_TR_1"/>
    <property type="match status" value="1"/>
</dbReference>
<dbReference type="PROSITE" id="PS51722">
    <property type="entry name" value="G_TR_2"/>
    <property type="match status" value="1"/>
</dbReference>
<accession>Q6MER8</accession>
<sequence>MARPAKEHLKNLRNIGIMAHIDAGKTTTTERILYYSGRSHKIGEVHEGAATMDWMAQEQERGITITSAATTVFWKDAKINIIDTPGHVDFTIEVERSLRVLDGSVALFCSVSGVEPQSETVWRQADKYGVPRIAFVNKMDRMGADFFDAVKTMREKLHANAIPVQCPIGAEADFKGMVDLVKMRAYLFHDETLGADWDETDIPADLLEKCKKMRAELLEELATLDEDDENFMQKVLENPDSLTEDEINAAIRKGVCQNKFNPVLCGSAFKNKGVQQLLDAVVAWMPSPLDRGQIKAHDLNTDEEILLTPDDEQPLAALAFKIMTDPYVGRLTYIRIYSGTLTKGTSLLNTTKGGEERISRLLEMHANKREEKDEFHTGDIAACIGLKKATTGDTLCTSKRPILLEKMEFPEPVISMAIEPKSKGDREKLAMALSSLSIEDPTFRVTTDEETGQTIIAGMGELHLEILHDRMKREFNVEANVGKPQVAYKETITIPGSSQTKFVKQSGGRGQYAHVELEIRPNEKGKGNEVVSKIVGGVIPREYIAPTIKGIEEGLSTGVLAGFNLVDVLVDIVFGSYHDVDSNEMAFKICGSMALKEAARKCKPVILEPIMKVDVTTPEAHMGDVIGDLNRRRGQIVGQENHKGAVIIHAEVPLSEMFGYSTLLRSLSSGRATYVMEPSHFERVPSKIQEEIIKK</sequence>
<feature type="chain" id="PRO_0000091173" description="Elongation factor G">
    <location>
        <begin position="1"/>
        <end position="695"/>
    </location>
</feature>
<feature type="domain" description="tr-type G">
    <location>
        <begin position="10"/>
        <end position="289"/>
    </location>
</feature>
<feature type="binding site" evidence="1">
    <location>
        <begin position="19"/>
        <end position="26"/>
    </location>
    <ligand>
        <name>GTP</name>
        <dbReference type="ChEBI" id="CHEBI:37565"/>
    </ligand>
</feature>
<feature type="binding site" evidence="1">
    <location>
        <begin position="83"/>
        <end position="87"/>
    </location>
    <ligand>
        <name>GTP</name>
        <dbReference type="ChEBI" id="CHEBI:37565"/>
    </ligand>
</feature>
<feature type="binding site" evidence="1">
    <location>
        <begin position="137"/>
        <end position="140"/>
    </location>
    <ligand>
        <name>GTP</name>
        <dbReference type="ChEBI" id="CHEBI:37565"/>
    </ligand>
</feature>
<protein>
    <recommendedName>
        <fullName evidence="1">Elongation factor G</fullName>
        <shortName evidence="1">EF-G</shortName>
    </recommendedName>
</protein>
<proteinExistence type="inferred from homology"/>
<organism>
    <name type="scientific">Protochlamydia amoebophila (strain UWE25)</name>
    <dbReference type="NCBI Taxonomy" id="264201"/>
    <lineage>
        <taxon>Bacteria</taxon>
        <taxon>Pseudomonadati</taxon>
        <taxon>Chlamydiota</taxon>
        <taxon>Chlamydiia</taxon>
        <taxon>Parachlamydiales</taxon>
        <taxon>Parachlamydiaceae</taxon>
        <taxon>Candidatus Protochlamydia</taxon>
    </lineage>
</organism>
<name>EFG_PARUW</name>
<reference key="1">
    <citation type="journal article" date="2004" name="Science">
        <title>Illuminating the evolutionary history of chlamydiae.</title>
        <authorList>
            <person name="Horn M."/>
            <person name="Collingro A."/>
            <person name="Schmitz-Esser S."/>
            <person name="Beier C.L."/>
            <person name="Purkhold U."/>
            <person name="Fartmann B."/>
            <person name="Brandt P."/>
            <person name="Nyakatura G.J."/>
            <person name="Droege M."/>
            <person name="Frishman D."/>
            <person name="Rattei T."/>
            <person name="Mewes H.-W."/>
            <person name="Wagner M."/>
        </authorList>
    </citation>
    <scope>NUCLEOTIDE SEQUENCE [LARGE SCALE GENOMIC DNA]</scope>
    <source>
        <strain>UWE25</strain>
    </source>
</reference>